<gene>
    <name evidence="1" type="primary">viaA</name>
    <name type="ordered locus">PMI3051</name>
</gene>
<organism>
    <name type="scientific">Proteus mirabilis (strain HI4320)</name>
    <dbReference type="NCBI Taxonomy" id="529507"/>
    <lineage>
        <taxon>Bacteria</taxon>
        <taxon>Pseudomonadati</taxon>
        <taxon>Pseudomonadota</taxon>
        <taxon>Gammaproteobacteria</taxon>
        <taxon>Enterobacterales</taxon>
        <taxon>Morganellaceae</taxon>
        <taxon>Proteus</taxon>
    </lineage>
</organism>
<feature type="chain" id="PRO_1000186155" description="Regulatory protein ViaA">
    <location>
        <begin position="1"/>
        <end position="485"/>
    </location>
</feature>
<evidence type="ECO:0000255" key="1">
    <source>
        <dbReference type="HAMAP-Rule" id="MF_01626"/>
    </source>
</evidence>
<name>VIAA_PROMH</name>
<accession>B4F0D4</accession>
<comment type="function">
    <text evidence="1">Component of the RavA-ViaA chaperone complex, which may act on the membrane to optimize the function of some of the respiratory chains. ViaA stimulates the ATPase activity of RavA.</text>
</comment>
<comment type="subunit">
    <text evidence="1">Homodimer. Interacts with RavA.</text>
</comment>
<comment type="subcellular location">
    <subcellularLocation>
        <location evidence="1">Cytoplasm</location>
    </subcellularLocation>
</comment>
<comment type="similarity">
    <text evidence="1">Belongs to the ViaA family.</text>
</comment>
<keyword id="KW-0143">Chaperone</keyword>
<keyword id="KW-0963">Cytoplasm</keyword>
<keyword id="KW-1185">Reference proteome</keyword>
<sequence>MLTLSTIDMLLAINEGQLIEEVIITLLASPQLAVFFEKHPRLKKALLKDIYQWKKSLQEKVKETLVPTIIADEFALYQQTQSLCNAVFNQQVDNILTELNQLDSSFVIEATQLIKTNKPFSPAQQALFIQRWRISLIFQVTTLHKALFEQEQEQLLAELQERLALSGSLSNTFSENERAAGRLWDMSKGVITKTPYDEKIIQRYSDFLNQQPELHKLASLLGRSKTAKSLPEESVIFESITIVEKAPDTTPEQVNGIGLSDDILRLLPAELALLGINEVEYEFYRKLIEKQLNTYRLQGDSWQERTVLRPVTHHLDEERPRGPFIICIDTSGSMGGFNEQCAKAFGLALMKIALADNRACHVMLFSTEMIHYQLSSSDGLQELVKFLNQTFRGGTDLASCLNEVADKLNTPTWKDADAVVISDFVAQRLPENLINKIKKVQQQQHNRFHAVTLSNYGKPSIMKIFDHIWRFDTGLKSRLLRRWRQ</sequence>
<protein>
    <recommendedName>
        <fullName evidence="1">Regulatory protein ViaA</fullName>
    </recommendedName>
    <alternativeName>
        <fullName evidence="1">VWA interacting with AAA+ ATPase</fullName>
    </alternativeName>
</protein>
<proteinExistence type="inferred from homology"/>
<dbReference type="EMBL" id="AM942759">
    <property type="protein sequence ID" value="CAR45999.1"/>
    <property type="molecule type" value="Genomic_DNA"/>
</dbReference>
<dbReference type="RefSeq" id="WP_004246605.1">
    <property type="nucleotide sequence ID" value="NC_010554.1"/>
</dbReference>
<dbReference type="SMR" id="B4F0D4"/>
<dbReference type="EnsemblBacteria" id="CAR45999">
    <property type="protein sequence ID" value="CAR45999"/>
    <property type="gene ID" value="PMI3051"/>
</dbReference>
<dbReference type="GeneID" id="6802055"/>
<dbReference type="KEGG" id="pmr:PMI3051"/>
<dbReference type="eggNOG" id="COG2425">
    <property type="taxonomic scope" value="Bacteria"/>
</dbReference>
<dbReference type="HOGENOM" id="CLU_022130_0_0_6"/>
<dbReference type="Proteomes" id="UP000008319">
    <property type="component" value="Chromosome"/>
</dbReference>
<dbReference type="GO" id="GO:0005829">
    <property type="term" value="C:cytosol"/>
    <property type="evidence" value="ECO:0007669"/>
    <property type="project" value="TreeGrafter"/>
</dbReference>
<dbReference type="CDD" id="cd01462">
    <property type="entry name" value="VWA_YIEM_type"/>
    <property type="match status" value="1"/>
</dbReference>
<dbReference type="Gene3D" id="3.40.50.410">
    <property type="entry name" value="von Willebrand factor, type A domain"/>
    <property type="match status" value="1"/>
</dbReference>
<dbReference type="HAMAP" id="MF_01626">
    <property type="entry name" value="ViaA"/>
    <property type="match status" value="1"/>
</dbReference>
<dbReference type="InterPro" id="IPR008912">
    <property type="entry name" value="Uncharacterised_CoxE"/>
</dbReference>
<dbReference type="InterPro" id="IPR023481">
    <property type="entry name" value="Uncharacterised_ViaA"/>
</dbReference>
<dbReference type="InterPro" id="IPR002035">
    <property type="entry name" value="VWF_A"/>
</dbReference>
<dbReference type="InterPro" id="IPR036465">
    <property type="entry name" value="vWFA_dom_sf"/>
</dbReference>
<dbReference type="NCBIfam" id="NF008230">
    <property type="entry name" value="PRK10997.1"/>
    <property type="match status" value="1"/>
</dbReference>
<dbReference type="PANTHER" id="PTHR36846">
    <property type="entry name" value="PROTEIN VIAA"/>
    <property type="match status" value="1"/>
</dbReference>
<dbReference type="PANTHER" id="PTHR36846:SF1">
    <property type="entry name" value="PROTEIN VIAA"/>
    <property type="match status" value="1"/>
</dbReference>
<dbReference type="Pfam" id="PF05762">
    <property type="entry name" value="VWA_CoxE"/>
    <property type="match status" value="1"/>
</dbReference>
<dbReference type="SMART" id="SM00327">
    <property type="entry name" value="VWA"/>
    <property type="match status" value="1"/>
</dbReference>
<dbReference type="SUPFAM" id="SSF53300">
    <property type="entry name" value="vWA-like"/>
    <property type="match status" value="1"/>
</dbReference>
<reference key="1">
    <citation type="journal article" date="2008" name="J. Bacteriol.">
        <title>Complete genome sequence of uropathogenic Proteus mirabilis, a master of both adherence and motility.</title>
        <authorList>
            <person name="Pearson M.M."/>
            <person name="Sebaihia M."/>
            <person name="Churcher C."/>
            <person name="Quail M.A."/>
            <person name="Seshasayee A.S."/>
            <person name="Luscombe N.M."/>
            <person name="Abdellah Z."/>
            <person name="Arrosmith C."/>
            <person name="Atkin B."/>
            <person name="Chillingworth T."/>
            <person name="Hauser H."/>
            <person name="Jagels K."/>
            <person name="Moule S."/>
            <person name="Mungall K."/>
            <person name="Norbertczak H."/>
            <person name="Rabbinowitsch E."/>
            <person name="Walker D."/>
            <person name="Whithead S."/>
            <person name="Thomson N.R."/>
            <person name="Rather P.N."/>
            <person name="Parkhill J."/>
            <person name="Mobley H.L.T."/>
        </authorList>
    </citation>
    <scope>NUCLEOTIDE SEQUENCE [LARGE SCALE GENOMIC DNA]</scope>
    <source>
        <strain>HI4320</strain>
    </source>
</reference>